<keyword id="KW-1185">Reference proteome</keyword>
<evidence type="ECO:0000305" key="1"/>
<feature type="chain" id="PRO_0000077770" description="Ead protein">
    <location>
        <begin position="1"/>
        <end position="197"/>
    </location>
</feature>
<dbReference type="EMBL" id="L06296">
    <property type="protein sequence ID" value="AAC18884.1"/>
    <property type="molecule type" value="Genomic_DNA"/>
</dbReference>
<dbReference type="EMBL" id="AF217253">
    <property type="protein sequence ID" value="AAF75008.1"/>
    <property type="status" value="ALT_INIT"/>
    <property type="molecule type" value="Genomic_DNA"/>
</dbReference>
<dbReference type="EMBL" id="BK000583">
    <property type="protein sequence ID" value="DAA01004.1"/>
    <property type="molecule type" value="Genomic_DNA"/>
</dbReference>
<dbReference type="RefSeq" id="YP_063721.1">
    <property type="nucleotide sequence ID" value="NC_002371.2"/>
</dbReference>
<dbReference type="GeneID" id="2944223"/>
<dbReference type="KEGG" id="vg:2944223"/>
<dbReference type="OrthoDB" id="12322at10239"/>
<dbReference type="Proteomes" id="UP000001795">
    <property type="component" value="Segment"/>
</dbReference>
<dbReference type="Proteomes" id="UP000007960">
    <property type="component" value="Segment"/>
</dbReference>
<dbReference type="InterPro" id="IPR025153">
    <property type="entry name" value="Ead_Ea22"/>
</dbReference>
<dbReference type="Pfam" id="PF13935">
    <property type="entry name" value="Ead_Ea22"/>
    <property type="match status" value="1"/>
</dbReference>
<proteinExistence type="predicted"/>
<organismHost>
    <name type="scientific">Salmonella typhimurium</name>
    <dbReference type="NCBI Taxonomy" id="90371"/>
</organismHost>
<comment type="similarity">
    <text evidence="1">To phage lambda protein EA22.</text>
</comment>
<comment type="sequence caution" evidence="1">
    <conflict type="erroneous initiation">
        <sequence resource="EMBL-CDS" id="AAF75008"/>
    </conflict>
</comment>
<accession>Q03546</accession>
<accession>A8CGA3</accession>
<accession>Q8LTF8</accession>
<gene>
    <name type="primary">ead</name>
</gene>
<protein>
    <recommendedName>
        <fullName>Ead protein</fullName>
    </recommendedName>
</protein>
<name>EAD_BPP22</name>
<organism>
    <name type="scientific">Salmonella phage P22</name>
    <name type="common">Bacteriophage P22</name>
    <dbReference type="NCBI Taxonomy" id="10754"/>
    <lineage>
        <taxon>Viruses</taxon>
        <taxon>Duplodnaviria</taxon>
        <taxon>Heunggongvirae</taxon>
        <taxon>Uroviricota</taxon>
        <taxon>Caudoviricetes</taxon>
        <taxon>Lederbergvirus</taxon>
    </lineage>
</organism>
<sequence>MSNIDKQALREEFQYMQDHYSDPADRARQVIYIAAEALLDELDKKQQYIKLRDQEDEDIALTVGKLRVELEAAKKRMTEQSAIVAAAEKLVRCKGRYHSELNYRALAKLFGVITPDLPPLEHENVHYADAAEVEITALRQRIQELEAKLETDDKLQDGAFRDGLKAGFSYGQTDDQSGFTQCMSAYSTRAGIKVKGE</sequence>
<reference key="1">
    <citation type="journal article" date="1993" name="Mol. Microbiol.">
        <title>The int genes of bacteriophages P22 and lambda are regulated by different mechanisms.</title>
        <authorList>
            <person name="Wulff D.L."/>
            <person name="Ho Y.S."/>
            <person name="Powers S."/>
            <person name="Rosenberg M."/>
        </authorList>
    </citation>
    <scope>NUCLEOTIDE SEQUENCE</scope>
</reference>
<reference key="2">
    <citation type="journal article" date="2000" name="J. Bacteriol.">
        <title>Sequence of the genome of Salmonella bacteriophage P22.</title>
        <authorList>
            <person name="Vander Byl C.S."/>
            <person name="Kropinski A.M.B."/>
        </authorList>
    </citation>
    <scope>NUCLEOTIDE SEQUENCE [LARGE SCALE GENOMIC DNA]</scope>
</reference>
<reference key="3">
    <citation type="journal article" date="2003" name="J. Bacteriol.">
        <title>Corrected sequence of the bacteriophage P22 genome.</title>
        <authorList>
            <person name="Pedulla M.L."/>
            <person name="Ford M.E."/>
            <person name="Karthikeyan T."/>
            <person name="Houtz J.M."/>
            <person name="Hendrix R.W."/>
            <person name="Hatfull G.F."/>
            <person name="Poteete A.R."/>
            <person name="Gilcrease E.B."/>
            <person name="Winn-Stapley D.A."/>
            <person name="Casjens S.R."/>
        </authorList>
    </citation>
    <scope>NUCLEOTIDE SEQUENCE [LARGE SCALE GENOMIC DNA]</scope>
</reference>